<organism>
    <name type="scientific">Vibrio campbellii (strain ATCC BAA-1116)</name>
    <dbReference type="NCBI Taxonomy" id="2902295"/>
    <lineage>
        <taxon>Bacteria</taxon>
        <taxon>Pseudomonadati</taxon>
        <taxon>Pseudomonadota</taxon>
        <taxon>Gammaproteobacteria</taxon>
        <taxon>Vibrionales</taxon>
        <taxon>Vibrionaceae</taxon>
        <taxon>Vibrio</taxon>
    </lineage>
</organism>
<evidence type="ECO:0000255" key="1">
    <source>
        <dbReference type="HAMAP-Rule" id="MF_01006"/>
    </source>
</evidence>
<sequence length="267" mass="29397">MSYFEAFILALIQGLTEFLPISSSAHLILPSAILGWEDQGLAFDVAVHVGTLMAVVIYFRQEVITLFQALFASIFKGDRSKEAKLAWMIVIATIPACVFGLLMKDIIEVYLRSAYVIATTTIIFGLLLWWVDRNAELVADEYQTGWKKALFIGIAQALAMIPGTSRSGATITAALYLGFTREAAARFSFLMSIPIITLAGGYLGMKLVTSGEPVHIGFLLTGIVTSFISAYICIHFFLKMISRMGMTPFVIYRLILGFGLFAFLLMA</sequence>
<protein>
    <recommendedName>
        <fullName evidence="1">Undecaprenyl-diphosphatase</fullName>
        <ecNumber evidence="1">3.6.1.27</ecNumber>
    </recommendedName>
    <alternativeName>
        <fullName evidence="1">Bacitracin resistance protein</fullName>
    </alternativeName>
    <alternativeName>
        <fullName evidence="1">Undecaprenyl pyrophosphate phosphatase</fullName>
    </alternativeName>
</protein>
<name>UPPP_VIBC1</name>
<comment type="function">
    <text evidence="1">Catalyzes the dephosphorylation of undecaprenyl diphosphate (UPP). Confers resistance to bacitracin.</text>
</comment>
<comment type="catalytic activity">
    <reaction evidence="1">
        <text>di-trans,octa-cis-undecaprenyl diphosphate + H2O = di-trans,octa-cis-undecaprenyl phosphate + phosphate + H(+)</text>
        <dbReference type="Rhea" id="RHEA:28094"/>
        <dbReference type="ChEBI" id="CHEBI:15377"/>
        <dbReference type="ChEBI" id="CHEBI:15378"/>
        <dbReference type="ChEBI" id="CHEBI:43474"/>
        <dbReference type="ChEBI" id="CHEBI:58405"/>
        <dbReference type="ChEBI" id="CHEBI:60392"/>
        <dbReference type="EC" id="3.6.1.27"/>
    </reaction>
</comment>
<comment type="subcellular location">
    <subcellularLocation>
        <location evidence="1">Cell inner membrane</location>
        <topology evidence="1">Multi-pass membrane protein</topology>
    </subcellularLocation>
</comment>
<comment type="miscellaneous">
    <text>Bacitracin is thought to be involved in the inhibition of peptidoglycan synthesis by sequestering undecaprenyl diphosphate, thereby reducing the pool of lipid carrier available.</text>
</comment>
<comment type="similarity">
    <text evidence="1">Belongs to the UppP family.</text>
</comment>
<feature type="chain" id="PRO_1000062820" description="Undecaprenyl-diphosphatase">
    <location>
        <begin position="1"/>
        <end position="267"/>
    </location>
</feature>
<feature type="transmembrane region" description="Helical" evidence="1">
    <location>
        <begin position="1"/>
        <end position="21"/>
    </location>
</feature>
<feature type="transmembrane region" description="Helical" evidence="1">
    <location>
        <begin position="39"/>
        <end position="59"/>
    </location>
</feature>
<feature type="transmembrane region" description="Helical" evidence="1">
    <location>
        <begin position="83"/>
        <end position="103"/>
    </location>
</feature>
<feature type="transmembrane region" description="Helical" evidence="1">
    <location>
        <begin position="111"/>
        <end position="131"/>
    </location>
</feature>
<feature type="transmembrane region" description="Helical" evidence="1">
    <location>
        <begin position="144"/>
        <end position="164"/>
    </location>
</feature>
<feature type="transmembrane region" description="Helical" evidence="1">
    <location>
        <begin position="189"/>
        <end position="209"/>
    </location>
</feature>
<feature type="transmembrane region" description="Helical" evidence="1">
    <location>
        <begin position="218"/>
        <end position="238"/>
    </location>
</feature>
<feature type="transmembrane region" description="Helical" evidence="1">
    <location>
        <begin position="246"/>
        <end position="266"/>
    </location>
</feature>
<gene>
    <name evidence="1" type="primary">uppP</name>
    <name type="ordered locus">VIBHAR_00857</name>
</gene>
<keyword id="KW-0046">Antibiotic resistance</keyword>
<keyword id="KW-0997">Cell inner membrane</keyword>
<keyword id="KW-1003">Cell membrane</keyword>
<keyword id="KW-0133">Cell shape</keyword>
<keyword id="KW-0961">Cell wall biogenesis/degradation</keyword>
<keyword id="KW-0378">Hydrolase</keyword>
<keyword id="KW-0472">Membrane</keyword>
<keyword id="KW-0573">Peptidoglycan synthesis</keyword>
<keyword id="KW-0812">Transmembrane</keyword>
<keyword id="KW-1133">Transmembrane helix</keyword>
<proteinExistence type="inferred from homology"/>
<accession>A7MWQ3</accession>
<reference key="1">
    <citation type="submission" date="2007-08" db="EMBL/GenBank/DDBJ databases">
        <authorList>
            <consortium name="The Vibrio harveyi Genome Sequencing Project"/>
            <person name="Bassler B."/>
            <person name="Clifton S.W."/>
            <person name="Fulton L."/>
            <person name="Delehaunty K."/>
            <person name="Fronick C."/>
            <person name="Harrison M."/>
            <person name="Markivic C."/>
            <person name="Fulton R."/>
            <person name="Tin-Wollam A.-M."/>
            <person name="Shah N."/>
            <person name="Pepin K."/>
            <person name="Nash W."/>
            <person name="Thiruvilangam P."/>
            <person name="Bhonagiri V."/>
            <person name="Waters C."/>
            <person name="Tu K.C."/>
            <person name="Irgon J."/>
            <person name="Wilson R.K."/>
        </authorList>
    </citation>
    <scope>NUCLEOTIDE SEQUENCE [LARGE SCALE GENOMIC DNA]</scope>
    <source>
        <strain>ATCC BAA-1116 / BB120</strain>
    </source>
</reference>
<dbReference type="EC" id="3.6.1.27" evidence="1"/>
<dbReference type="EMBL" id="CP000789">
    <property type="protein sequence ID" value="ABU69857.1"/>
    <property type="molecule type" value="Genomic_DNA"/>
</dbReference>
<dbReference type="RefSeq" id="WP_012126957.1">
    <property type="nucleotide sequence ID" value="NC_022269.1"/>
</dbReference>
<dbReference type="SMR" id="A7MWQ3"/>
<dbReference type="KEGG" id="vha:VIBHAR_00857"/>
<dbReference type="PATRIC" id="fig|338187.25.peg.1759"/>
<dbReference type="Proteomes" id="UP000008152">
    <property type="component" value="Chromosome I"/>
</dbReference>
<dbReference type="GO" id="GO:0005886">
    <property type="term" value="C:plasma membrane"/>
    <property type="evidence" value="ECO:0007669"/>
    <property type="project" value="UniProtKB-SubCell"/>
</dbReference>
<dbReference type="GO" id="GO:0050380">
    <property type="term" value="F:undecaprenyl-diphosphatase activity"/>
    <property type="evidence" value="ECO:0007669"/>
    <property type="project" value="UniProtKB-UniRule"/>
</dbReference>
<dbReference type="GO" id="GO:0071555">
    <property type="term" value="P:cell wall organization"/>
    <property type="evidence" value="ECO:0007669"/>
    <property type="project" value="UniProtKB-KW"/>
</dbReference>
<dbReference type="GO" id="GO:0009252">
    <property type="term" value="P:peptidoglycan biosynthetic process"/>
    <property type="evidence" value="ECO:0007669"/>
    <property type="project" value="UniProtKB-KW"/>
</dbReference>
<dbReference type="GO" id="GO:0008360">
    <property type="term" value="P:regulation of cell shape"/>
    <property type="evidence" value="ECO:0007669"/>
    <property type="project" value="UniProtKB-KW"/>
</dbReference>
<dbReference type="GO" id="GO:0046677">
    <property type="term" value="P:response to antibiotic"/>
    <property type="evidence" value="ECO:0007669"/>
    <property type="project" value="UniProtKB-UniRule"/>
</dbReference>
<dbReference type="HAMAP" id="MF_01006">
    <property type="entry name" value="Undec_diphosphatase"/>
    <property type="match status" value="1"/>
</dbReference>
<dbReference type="InterPro" id="IPR003824">
    <property type="entry name" value="UppP"/>
</dbReference>
<dbReference type="NCBIfam" id="NF001393">
    <property type="entry name" value="PRK00281.2-4"/>
    <property type="match status" value="1"/>
</dbReference>
<dbReference type="NCBIfam" id="TIGR00753">
    <property type="entry name" value="undec_PP_bacA"/>
    <property type="match status" value="1"/>
</dbReference>
<dbReference type="PANTHER" id="PTHR30622">
    <property type="entry name" value="UNDECAPRENYL-DIPHOSPHATASE"/>
    <property type="match status" value="1"/>
</dbReference>
<dbReference type="PANTHER" id="PTHR30622:SF4">
    <property type="entry name" value="UNDECAPRENYL-DIPHOSPHATASE"/>
    <property type="match status" value="1"/>
</dbReference>
<dbReference type="Pfam" id="PF02673">
    <property type="entry name" value="BacA"/>
    <property type="match status" value="1"/>
</dbReference>